<protein>
    <recommendedName>
        <fullName>GTP cyclohydrolase 1 feedback regulatory protein</fullName>
        <shortName>GFRP</shortName>
    </recommendedName>
    <alternativeName>
        <fullName>GTP cyclohydrolase I feedback regulatory protein</fullName>
    </alternativeName>
    <alternativeName>
        <fullName>p35</fullName>
    </alternativeName>
</protein>
<organism>
    <name type="scientific">Rattus norvegicus</name>
    <name type="common">Rat</name>
    <dbReference type="NCBI Taxonomy" id="10116"/>
    <lineage>
        <taxon>Eukaryota</taxon>
        <taxon>Metazoa</taxon>
        <taxon>Chordata</taxon>
        <taxon>Craniata</taxon>
        <taxon>Vertebrata</taxon>
        <taxon>Euteleostomi</taxon>
        <taxon>Mammalia</taxon>
        <taxon>Eutheria</taxon>
        <taxon>Euarchontoglires</taxon>
        <taxon>Glires</taxon>
        <taxon>Rodentia</taxon>
        <taxon>Myomorpha</taxon>
        <taxon>Muroidea</taxon>
        <taxon>Muridae</taxon>
        <taxon>Murinae</taxon>
        <taxon>Rattus</taxon>
    </lineage>
</organism>
<name>GFRP_RAT</name>
<feature type="chain" id="PRO_0000189677" description="GTP cyclohydrolase 1 feedback regulatory protein">
    <location>
        <begin position="1"/>
        <end position="84"/>
    </location>
</feature>
<feature type="strand" evidence="6">
    <location>
        <begin position="3"/>
        <end position="10"/>
    </location>
</feature>
<feature type="strand" evidence="5">
    <location>
        <begin position="12"/>
        <end position="14"/>
    </location>
</feature>
<feature type="strand" evidence="6">
    <location>
        <begin position="17"/>
        <end position="20"/>
    </location>
</feature>
<feature type="helix" evidence="6">
    <location>
        <begin position="26"/>
        <end position="31"/>
    </location>
</feature>
<feature type="strand" evidence="6">
    <location>
        <begin position="35"/>
        <end position="37"/>
    </location>
</feature>
<feature type="strand" evidence="6">
    <location>
        <begin position="46"/>
        <end position="51"/>
    </location>
</feature>
<feature type="helix" evidence="6">
    <location>
        <begin position="53"/>
        <end position="62"/>
    </location>
</feature>
<feature type="strand" evidence="6">
    <location>
        <begin position="66"/>
        <end position="73"/>
    </location>
</feature>
<feature type="strand" evidence="6">
    <location>
        <begin position="76"/>
        <end position="82"/>
    </location>
</feature>
<dbReference type="EMBL" id="U53710">
    <property type="protein sequence ID" value="AAC52776.1"/>
    <property type="molecule type" value="mRNA"/>
</dbReference>
<dbReference type="EMBL" id="U85512">
    <property type="protein sequence ID" value="AAD09241.1"/>
    <property type="molecule type" value="mRNA"/>
</dbReference>
<dbReference type="EMBL" id="BC086944">
    <property type="protein sequence ID" value="AAH86944.1"/>
    <property type="molecule type" value="mRNA"/>
</dbReference>
<dbReference type="RefSeq" id="NP_598279.1">
    <property type="nucleotide sequence ID" value="NM_133595.2"/>
</dbReference>
<dbReference type="PDB" id="1IS7">
    <property type="method" value="X-ray"/>
    <property type="resolution" value="2.80 A"/>
    <property type="chains" value="K/L/M/N/O/P/Q/R/S/T=1-84"/>
</dbReference>
<dbReference type="PDB" id="1IS8">
    <property type="method" value="X-ray"/>
    <property type="resolution" value="2.70 A"/>
    <property type="chains" value="K/L/M/N/O/P/Q/R/S/T=1-84"/>
</dbReference>
<dbReference type="PDB" id="1JG5">
    <property type="method" value="X-ray"/>
    <property type="resolution" value="2.60 A"/>
    <property type="chains" value="A/B/C/D/E=2-84"/>
</dbReference>
<dbReference type="PDB" id="1WPL">
    <property type="method" value="X-ray"/>
    <property type="resolution" value="2.80 A"/>
    <property type="chains" value="K/L/M/N/O/P/Q/R/S/T=1-84"/>
</dbReference>
<dbReference type="PDBsum" id="1IS7"/>
<dbReference type="PDBsum" id="1IS8"/>
<dbReference type="PDBsum" id="1JG5"/>
<dbReference type="PDBsum" id="1WPL"/>
<dbReference type="SMR" id="P70552"/>
<dbReference type="BioGRID" id="251135">
    <property type="interactions" value="2"/>
</dbReference>
<dbReference type="CORUM" id="P70552"/>
<dbReference type="FunCoup" id="P70552">
    <property type="interactions" value="206"/>
</dbReference>
<dbReference type="IntAct" id="P70552">
    <property type="interactions" value="1"/>
</dbReference>
<dbReference type="STRING" id="10116.ENSRNOP00000016458"/>
<dbReference type="GlyGen" id="P70552">
    <property type="glycosylation" value="1 site"/>
</dbReference>
<dbReference type="iPTMnet" id="P70552"/>
<dbReference type="PhosphoSitePlus" id="P70552"/>
<dbReference type="PaxDb" id="10116-ENSRNOP00000016458"/>
<dbReference type="GeneID" id="171128"/>
<dbReference type="KEGG" id="rno:171128"/>
<dbReference type="UCSC" id="RGD:621746">
    <property type="organism name" value="rat"/>
</dbReference>
<dbReference type="AGR" id="RGD:621746"/>
<dbReference type="CTD" id="2644"/>
<dbReference type="RGD" id="621746">
    <property type="gene designation" value="Gchfr"/>
</dbReference>
<dbReference type="VEuPathDB" id="HostDB:ENSRNOG00000012290"/>
<dbReference type="eggNOG" id="ENOG502S4A0">
    <property type="taxonomic scope" value="Eukaryota"/>
</dbReference>
<dbReference type="HOGENOM" id="CLU_195651_0_0_1"/>
<dbReference type="InParanoid" id="P70552"/>
<dbReference type="OrthoDB" id="1019at9989"/>
<dbReference type="PhylomeDB" id="P70552"/>
<dbReference type="TreeFam" id="TF329303"/>
<dbReference type="Reactome" id="R-RNO-1474151">
    <property type="pathway name" value="Tetrahydrobiopterin (BH4) synthesis, recycling, salvage and regulation"/>
</dbReference>
<dbReference type="EvolutionaryTrace" id="P70552"/>
<dbReference type="PRO" id="PR:P70552"/>
<dbReference type="Proteomes" id="UP000002494">
    <property type="component" value="Chromosome 3"/>
</dbReference>
<dbReference type="Bgee" id="ENSRNOG00000012290">
    <property type="expression patterns" value="Expressed in liver and 19 other cell types or tissues"/>
</dbReference>
<dbReference type="GO" id="GO:0005737">
    <property type="term" value="C:cytoplasm"/>
    <property type="evidence" value="ECO:0000266"/>
    <property type="project" value="RGD"/>
</dbReference>
<dbReference type="GO" id="GO:0005829">
    <property type="term" value="C:cytosol"/>
    <property type="evidence" value="ECO:0007669"/>
    <property type="project" value="UniProtKB-SubCell"/>
</dbReference>
<dbReference type="GO" id="GO:0030425">
    <property type="term" value="C:dendrite"/>
    <property type="evidence" value="ECO:0000266"/>
    <property type="project" value="RGD"/>
</dbReference>
<dbReference type="GO" id="GO:0140535">
    <property type="term" value="C:intracellular protein-containing complex"/>
    <property type="evidence" value="ECO:0000314"/>
    <property type="project" value="RGD"/>
</dbReference>
<dbReference type="GO" id="GO:0042470">
    <property type="term" value="C:melanosome"/>
    <property type="evidence" value="ECO:0000266"/>
    <property type="project" value="RGD"/>
</dbReference>
<dbReference type="GO" id="GO:0031965">
    <property type="term" value="C:nuclear membrane"/>
    <property type="evidence" value="ECO:0000266"/>
    <property type="project" value="RGD"/>
</dbReference>
<dbReference type="GO" id="GO:0005634">
    <property type="term" value="C:nucleus"/>
    <property type="evidence" value="ECO:0000266"/>
    <property type="project" value="RGD"/>
</dbReference>
<dbReference type="GO" id="GO:0032991">
    <property type="term" value="C:protein-containing complex"/>
    <property type="evidence" value="ECO:0000314"/>
    <property type="project" value="RGD"/>
</dbReference>
<dbReference type="GO" id="GO:0016597">
    <property type="term" value="F:amino acid binding"/>
    <property type="evidence" value="ECO:0000314"/>
    <property type="project" value="RGD"/>
</dbReference>
<dbReference type="GO" id="GO:0044549">
    <property type="term" value="F:GTP cyclohydrolase binding"/>
    <property type="evidence" value="ECO:0000314"/>
    <property type="project" value="RGD"/>
</dbReference>
<dbReference type="GO" id="GO:0060308">
    <property type="term" value="F:GTP cyclohydrolase I regulator activity"/>
    <property type="evidence" value="ECO:0000314"/>
    <property type="project" value="RGD"/>
</dbReference>
<dbReference type="GO" id="GO:0030742">
    <property type="term" value="F:GTP-dependent protein binding"/>
    <property type="evidence" value="ECO:0000353"/>
    <property type="project" value="RGD"/>
</dbReference>
<dbReference type="GO" id="GO:0042802">
    <property type="term" value="F:identical protein binding"/>
    <property type="evidence" value="ECO:0000314"/>
    <property type="project" value="RGD"/>
</dbReference>
<dbReference type="GO" id="GO:0044877">
    <property type="term" value="F:protein-containing complex binding"/>
    <property type="evidence" value="ECO:0000314"/>
    <property type="project" value="RGD"/>
</dbReference>
<dbReference type="GO" id="GO:0009890">
    <property type="term" value="P:negative regulation of biosynthetic process"/>
    <property type="evidence" value="ECO:0007669"/>
    <property type="project" value="InterPro"/>
</dbReference>
<dbReference type="GO" id="GO:0065003">
    <property type="term" value="P:protein-containing complex assembly"/>
    <property type="evidence" value="ECO:0000314"/>
    <property type="project" value="RGD"/>
</dbReference>
<dbReference type="FunFam" id="3.30.1410.10:FF:000001">
    <property type="entry name" value="GTP cyclohydrolase 1 feedback regulatory protein"/>
    <property type="match status" value="1"/>
</dbReference>
<dbReference type="Gene3D" id="3.30.1410.10">
    <property type="entry name" value="GTP cyclohydrolase I feedback regulatory protein GFRP"/>
    <property type="match status" value="1"/>
</dbReference>
<dbReference type="InterPro" id="IPR036717">
    <property type="entry name" value="GFRP_sf"/>
</dbReference>
<dbReference type="InterPro" id="IPR009112">
    <property type="entry name" value="GTP_CycHdrlase_I_reg"/>
</dbReference>
<dbReference type="PANTHER" id="PTHR16852">
    <property type="entry name" value="GTP CYCLOHYDROLASE 1 FEEDBACK REGULATORY PROTEIN"/>
    <property type="match status" value="1"/>
</dbReference>
<dbReference type="PANTHER" id="PTHR16852:SF2">
    <property type="entry name" value="GTP CYCLOHYDROLASE 1 FEEDBACK REGULATORY PROTEIN"/>
    <property type="match status" value="1"/>
</dbReference>
<dbReference type="Pfam" id="PF06399">
    <property type="entry name" value="GFRP"/>
    <property type="match status" value="1"/>
</dbReference>
<dbReference type="SUPFAM" id="SSF69761">
    <property type="entry name" value="GTP cyclohydrolase I feedback regulatory protein, GFRP"/>
    <property type="match status" value="1"/>
</dbReference>
<keyword id="KW-0002">3D-structure</keyword>
<keyword id="KW-0963">Cytoplasm</keyword>
<keyword id="KW-0903">Direct protein sequencing</keyword>
<keyword id="KW-0472">Membrane</keyword>
<keyword id="KW-0539">Nucleus</keyword>
<keyword id="KW-1185">Reference proteome</keyword>
<reference key="1">
    <citation type="journal article" date="1996" name="J. Biol. Chem.">
        <title>Purification and cloning of the GTP cyclohydrolase I feedback regulatory protein, GFRP.</title>
        <authorList>
            <person name="Milstien S."/>
            <person name="Jaffe H."/>
            <person name="Kowlessur D."/>
            <person name="Bonner T.I."/>
        </authorList>
    </citation>
    <scope>NUCLEOTIDE SEQUENCE [MRNA]</scope>
    <scope>PROTEIN SEQUENCE OF 12-25; 55-62 AND 67-78</scope>
    <source>
        <tissue>Liver</tissue>
    </source>
</reference>
<reference key="2">
    <citation type="journal article" date="1997" name="J. Biol. Chem.">
        <title>GTP cyclohydrolase I feedback regulatory protein is a pentamer of identical subunits. Purification, cDNA cloning, and bacterial expression.</title>
        <authorList>
            <person name="Yoneyama T."/>
            <person name="Brewer J.M."/>
            <person name="Hatakeyama K."/>
        </authorList>
    </citation>
    <scope>NUCLEOTIDE SEQUENCE [MRNA]</scope>
    <scope>SUBUNIT</scope>
    <source>
        <strain>Wistar</strain>
    </source>
</reference>
<reference key="3">
    <citation type="journal article" date="2004" name="Genome Res.">
        <title>The status, quality, and expansion of the NIH full-length cDNA project: the Mammalian Gene Collection (MGC).</title>
        <authorList>
            <consortium name="The MGC Project Team"/>
        </authorList>
    </citation>
    <scope>NUCLEOTIDE SEQUENCE [LARGE SCALE MRNA]</scope>
    <source>
        <tissue>Liver</tissue>
    </source>
</reference>
<reference key="4">
    <citation type="journal article" date="2001" name="J. Mol. Biol.">
        <title>Crystal structure of rat GTP cyclohydrolase I feedback regulatory protein, GFRP.</title>
        <authorList>
            <person name="Bader G."/>
            <person name="Schiffmann S."/>
            <person name="Herrmann A."/>
            <person name="Fischer M."/>
            <person name="Gutlich M."/>
            <person name="Auerbach G."/>
            <person name="Ploom T."/>
            <person name="Bacher A."/>
            <person name="Huber R."/>
            <person name="Lemm T."/>
        </authorList>
    </citation>
    <scope>X-RAY CRYSTALLOGRAPHY (2.6 ANGSTROMS)</scope>
</reference>
<reference key="5">
    <citation type="journal article" date="2002" name="Proc. Natl. Acad. Sci. U.S.A.">
        <title>Crystal structure of the stimulatory complex of GTP cyclohydrolase I and its feedback regulatory protein GFRP.</title>
        <authorList>
            <person name="Maita N."/>
            <person name="Okada K."/>
            <person name="Hatakeyama K."/>
            <person name="Hakoshima T."/>
        </authorList>
    </citation>
    <scope>X-RAY CRYSTALLOGRAPHY (2.8 ANGSTROMS) IN COMPLEX WITH GCH1</scope>
</reference>
<proteinExistence type="evidence at protein level"/>
<sequence>MPYLLISTQIRMEVGPTMVGDEHSDPELMQQLGASKRRVLGNNFYEYYVNDPPRIVLDKLECRGFRVLSMTGVGQTLVWCLHKE</sequence>
<evidence type="ECO:0000250" key="1"/>
<evidence type="ECO:0000269" key="2">
    <source>
    </source>
</evidence>
<evidence type="ECO:0000269" key="3">
    <source>
    </source>
</evidence>
<evidence type="ECO:0000305" key="4"/>
<evidence type="ECO:0007829" key="5">
    <source>
        <dbReference type="PDB" id="1IS8"/>
    </source>
</evidence>
<evidence type="ECO:0007829" key="6">
    <source>
        <dbReference type="PDB" id="1JG5"/>
    </source>
</evidence>
<accession>P70552</accession>
<gene>
    <name type="primary">Gchfr</name>
    <name type="synonym">Gfrp</name>
</gene>
<comment type="function">
    <text>Mediates tetrahydrobiopterin inhibition of GTP cyclohydrolase 1. This inhibition is reversed by L-phenylalanine.</text>
</comment>
<comment type="subunit">
    <text evidence="2 3">Homopentamer. Forms a complex with GCH1 where a GCH1 homodecamer is sandwiched by two GFRP homopentamers. Interacts with GCH1.</text>
</comment>
<comment type="interaction">
    <interactant intactId="EBI-1032715">
        <id>P70552</id>
    </interactant>
    <interactant intactId="EBI-1032708">
        <id>P22288</id>
        <label>Gch1</label>
    </interactant>
    <organismsDiffer>false</organismsDiffer>
    <experiments>3</experiments>
</comment>
<comment type="subcellular location">
    <subcellularLocation>
        <location evidence="1">Nucleus</location>
    </subcellularLocation>
    <subcellularLocation>
        <location evidence="1">Nucleus membrane</location>
    </subcellularLocation>
    <subcellularLocation>
        <location evidence="1">Cytoplasm</location>
        <location evidence="1">Cytosol</location>
    </subcellularLocation>
</comment>
<comment type="tissue specificity">
    <text>Liver and kidney. Somewhat lower level in testis, heart, brain and lung.</text>
</comment>
<comment type="similarity">
    <text evidence="4">Belongs to the GFRP family.</text>
</comment>